<sequence>MATIRADEISKIIRERIEGYNREVKVVNTGTVLQVGDGIARIHGLDEVMAGELVEFEEGTIGIALNLESNNVGVVLMGDGLMIQEGSSVKATGRIAQIPVSEAYLGRVINALAKPIDGRGEITASESRLIESPAPGIMSRRSVYEPLQTGLIAIDAMIPVGRGQRELIIGDRQTGKTAVATDTILNQQGQNVICVYVAIGQKASSVAQVVTNFQERGAMEYTIVVAETADSPATLQYLAPYTGAALAEYFMYRERHTLIIYDDLSKQAQAYRQMSLLLRRPPGREAYPGDVFYLHSRLLERAAKLSSLLGEGSMTALPIVETQAGDVSAYIPTNVISITDGQIFLSADLFNAGIRPAINVGISVSRVGSAAQIKAMKKVAGKLKLELAQFAELEAFAQFASDLDKATQNQLARGQRLRELLKQPQSAPLTVEEQVMTIYTGTNGYLDSLELDQVRKYLVELRTYVKTNKPEFQEIISSTKTFTEEAEALLKEAIQEQMERFLLQEQA</sequence>
<dbReference type="EC" id="7.1.2.2" evidence="1"/>
<dbReference type="EMBL" id="X03775">
    <property type="protein sequence ID" value="CAA27403.1"/>
    <property type="molecule type" value="Genomic_DNA"/>
</dbReference>
<dbReference type="EMBL" id="AJ400848">
    <property type="protein sequence ID" value="CAB88710.1"/>
    <property type="status" value="ALT_INIT"/>
    <property type="molecule type" value="Genomic_DNA"/>
</dbReference>
<dbReference type="PIR" id="S00584">
    <property type="entry name" value="PWSPA"/>
</dbReference>
<dbReference type="RefSeq" id="NP_054917.2">
    <property type="nucleotide sequence ID" value="NC_002202.1"/>
</dbReference>
<dbReference type="PDB" id="1FX0">
    <property type="method" value="X-ray"/>
    <property type="resolution" value="3.20 A"/>
    <property type="chains" value="A=1-507"/>
</dbReference>
<dbReference type="PDB" id="1KMH">
    <property type="method" value="X-ray"/>
    <property type="resolution" value="3.40 A"/>
    <property type="chains" value="A=1-507"/>
</dbReference>
<dbReference type="PDB" id="6FKF">
    <property type="method" value="EM"/>
    <property type="resolution" value="3.10 A"/>
    <property type="chains" value="A/C/E=1-507"/>
</dbReference>
<dbReference type="PDB" id="6FKH">
    <property type="method" value="EM"/>
    <property type="resolution" value="4.20 A"/>
    <property type="chains" value="A/C/E=1-507"/>
</dbReference>
<dbReference type="PDB" id="6FKI">
    <property type="method" value="EM"/>
    <property type="resolution" value="4.30 A"/>
    <property type="chains" value="A/C/E=1-507"/>
</dbReference>
<dbReference type="PDB" id="6VM1">
    <property type="method" value="EM"/>
    <property type="resolution" value="7.90 A"/>
    <property type="chains" value="A/B/C=1-507"/>
</dbReference>
<dbReference type="PDB" id="6VM4">
    <property type="method" value="EM"/>
    <property type="resolution" value="7.08 A"/>
    <property type="chains" value="A/B/C=1-507"/>
</dbReference>
<dbReference type="PDB" id="6VMB">
    <property type="method" value="EM"/>
    <property type="resolution" value="5.23 A"/>
    <property type="chains" value="A/B/C=1-507"/>
</dbReference>
<dbReference type="PDB" id="6VMD">
    <property type="method" value="EM"/>
    <property type="resolution" value="4.53 A"/>
    <property type="chains" value="A/B/C=1-507"/>
</dbReference>
<dbReference type="PDB" id="6VMG">
    <property type="method" value="EM"/>
    <property type="resolution" value="6.46 A"/>
    <property type="chains" value="A/B/C=1-507"/>
</dbReference>
<dbReference type="PDB" id="6VOF">
    <property type="method" value="EM"/>
    <property type="resolution" value="4.51 A"/>
    <property type="chains" value="A/B/C=1-507"/>
</dbReference>
<dbReference type="PDB" id="6VOG">
    <property type="method" value="EM"/>
    <property type="resolution" value="4.35 A"/>
    <property type="chains" value="A/B/C=1-507"/>
</dbReference>
<dbReference type="PDB" id="6VOH">
    <property type="method" value="EM"/>
    <property type="resolution" value="4.16 A"/>
    <property type="chains" value="A/B/C=1-507"/>
</dbReference>
<dbReference type="PDB" id="6VOI">
    <property type="method" value="EM"/>
    <property type="resolution" value="4.03 A"/>
    <property type="chains" value="A/B/C=1-507"/>
</dbReference>
<dbReference type="PDB" id="6VOJ">
    <property type="method" value="EM"/>
    <property type="resolution" value="4.34 A"/>
    <property type="chains" value="A/B/C=1-507"/>
</dbReference>
<dbReference type="PDB" id="6VOK">
    <property type="method" value="EM"/>
    <property type="resolution" value="3.85 A"/>
    <property type="chains" value="A/B/C=1-507"/>
</dbReference>
<dbReference type="PDB" id="6VOL">
    <property type="method" value="EM"/>
    <property type="resolution" value="4.06 A"/>
    <property type="chains" value="A/B/C=1-507"/>
</dbReference>
<dbReference type="PDB" id="6VOM">
    <property type="method" value="EM"/>
    <property type="resolution" value="3.60 A"/>
    <property type="chains" value="A/B/C=1-507"/>
</dbReference>
<dbReference type="PDB" id="6VON">
    <property type="method" value="EM"/>
    <property type="resolution" value="3.35 A"/>
    <property type="chains" value="A/B/C=1-507"/>
</dbReference>
<dbReference type="PDB" id="6VOO">
    <property type="method" value="EM"/>
    <property type="resolution" value="3.05 A"/>
    <property type="chains" value="A/B/C=1-507"/>
</dbReference>
<dbReference type="PDBsum" id="1FX0"/>
<dbReference type="PDBsum" id="1KMH"/>
<dbReference type="PDBsum" id="6FKF"/>
<dbReference type="PDBsum" id="6FKH"/>
<dbReference type="PDBsum" id="6FKI"/>
<dbReference type="PDBsum" id="6VM1"/>
<dbReference type="PDBsum" id="6VM4"/>
<dbReference type="PDBsum" id="6VMB"/>
<dbReference type="PDBsum" id="6VMD"/>
<dbReference type="PDBsum" id="6VMG"/>
<dbReference type="PDBsum" id="6VOF"/>
<dbReference type="PDBsum" id="6VOG"/>
<dbReference type="PDBsum" id="6VOH"/>
<dbReference type="PDBsum" id="6VOI"/>
<dbReference type="PDBsum" id="6VOJ"/>
<dbReference type="PDBsum" id="6VOK"/>
<dbReference type="PDBsum" id="6VOL"/>
<dbReference type="PDBsum" id="6VOM"/>
<dbReference type="PDBsum" id="6VON"/>
<dbReference type="PDBsum" id="6VOO"/>
<dbReference type="EMDB" id="EMD-21235"/>
<dbReference type="EMDB" id="EMD-21238"/>
<dbReference type="EMDB" id="EMD-21239"/>
<dbReference type="EMDB" id="EMD-21240"/>
<dbReference type="EMDB" id="EMD-21241"/>
<dbReference type="EMDB" id="EMD-21262"/>
<dbReference type="EMDB" id="EMD-21263"/>
<dbReference type="EMDB" id="EMD-21264"/>
<dbReference type="EMDB" id="EMD-21265"/>
<dbReference type="EMDB" id="EMD-21266"/>
<dbReference type="EMDB" id="EMD-21267"/>
<dbReference type="EMDB" id="EMD-21268"/>
<dbReference type="EMDB" id="EMD-21269"/>
<dbReference type="EMDB" id="EMD-21270"/>
<dbReference type="EMDB" id="EMD-21271"/>
<dbReference type="EMDB" id="EMD-4270"/>
<dbReference type="EMDB" id="EMD-4271"/>
<dbReference type="EMDB" id="EMD-4272"/>
<dbReference type="SASBDB" id="P06450"/>
<dbReference type="SMR" id="P06450"/>
<dbReference type="FunCoup" id="P06450">
    <property type="interactions" value="244"/>
</dbReference>
<dbReference type="IntAct" id="P06450">
    <property type="interactions" value="8"/>
</dbReference>
<dbReference type="MINT" id="P06450"/>
<dbReference type="STRING" id="3562.P06450"/>
<dbReference type="ChEMBL" id="CHEMBL2366567"/>
<dbReference type="GeneID" id="2715575"/>
<dbReference type="KEGG" id="soe:2715575"/>
<dbReference type="InParanoid" id="P06450"/>
<dbReference type="OrthoDB" id="9805536at2759"/>
<dbReference type="EvolutionaryTrace" id="P06450"/>
<dbReference type="PRO" id="PR:P06450"/>
<dbReference type="Proteomes" id="UP001155700">
    <property type="component" value="Chloroplast Pltd"/>
</dbReference>
<dbReference type="GO" id="GO:0009535">
    <property type="term" value="C:chloroplast thylakoid membrane"/>
    <property type="evidence" value="ECO:0007669"/>
    <property type="project" value="UniProtKB-SubCell"/>
</dbReference>
<dbReference type="GO" id="GO:0045259">
    <property type="term" value="C:proton-transporting ATP synthase complex"/>
    <property type="evidence" value="ECO:0007669"/>
    <property type="project" value="UniProtKB-KW"/>
</dbReference>
<dbReference type="GO" id="GO:0043531">
    <property type="term" value="F:ADP binding"/>
    <property type="evidence" value="ECO:0000318"/>
    <property type="project" value="GO_Central"/>
</dbReference>
<dbReference type="GO" id="GO:0005524">
    <property type="term" value="F:ATP binding"/>
    <property type="evidence" value="ECO:0000318"/>
    <property type="project" value="GO_Central"/>
</dbReference>
<dbReference type="GO" id="GO:0046933">
    <property type="term" value="F:proton-transporting ATP synthase activity, rotational mechanism"/>
    <property type="evidence" value="ECO:0007669"/>
    <property type="project" value="UniProtKB-UniRule"/>
</dbReference>
<dbReference type="GO" id="GO:0015986">
    <property type="term" value="P:proton motive force-driven ATP synthesis"/>
    <property type="evidence" value="ECO:0000318"/>
    <property type="project" value="GO_Central"/>
</dbReference>
<dbReference type="CDD" id="cd18113">
    <property type="entry name" value="ATP-synt_F1_alpha_C"/>
    <property type="match status" value="1"/>
</dbReference>
<dbReference type="CDD" id="cd18116">
    <property type="entry name" value="ATP-synt_F1_alpha_N"/>
    <property type="match status" value="1"/>
</dbReference>
<dbReference type="CDD" id="cd01132">
    <property type="entry name" value="F1-ATPase_alpha_CD"/>
    <property type="match status" value="1"/>
</dbReference>
<dbReference type="FunFam" id="1.20.150.20:FF:000001">
    <property type="entry name" value="ATP synthase subunit alpha"/>
    <property type="match status" value="1"/>
</dbReference>
<dbReference type="FunFam" id="2.40.30.20:FF:000001">
    <property type="entry name" value="ATP synthase subunit alpha"/>
    <property type="match status" value="1"/>
</dbReference>
<dbReference type="FunFam" id="3.40.50.300:FF:000002">
    <property type="entry name" value="ATP synthase subunit alpha"/>
    <property type="match status" value="1"/>
</dbReference>
<dbReference type="Gene3D" id="2.40.30.20">
    <property type="match status" value="1"/>
</dbReference>
<dbReference type="Gene3D" id="1.20.150.20">
    <property type="entry name" value="ATP synthase alpha/beta chain, C-terminal domain"/>
    <property type="match status" value="1"/>
</dbReference>
<dbReference type="Gene3D" id="3.40.50.300">
    <property type="entry name" value="P-loop containing nucleotide triphosphate hydrolases"/>
    <property type="match status" value="1"/>
</dbReference>
<dbReference type="HAMAP" id="MF_01346">
    <property type="entry name" value="ATP_synth_alpha_bact"/>
    <property type="match status" value="1"/>
</dbReference>
<dbReference type="InterPro" id="IPR023366">
    <property type="entry name" value="ATP_synth_asu-like_sf"/>
</dbReference>
<dbReference type="InterPro" id="IPR000793">
    <property type="entry name" value="ATP_synth_asu_C"/>
</dbReference>
<dbReference type="InterPro" id="IPR038376">
    <property type="entry name" value="ATP_synth_asu_C_sf"/>
</dbReference>
<dbReference type="InterPro" id="IPR033732">
    <property type="entry name" value="ATP_synth_F1_a_nt-bd_dom"/>
</dbReference>
<dbReference type="InterPro" id="IPR005294">
    <property type="entry name" value="ATP_synth_F1_asu"/>
</dbReference>
<dbReference type="InterPro" id="IPR020003">
    <property type="entry name" value="ATPase_a/bsu_AS"/>
</dbReference>
<dbReference type="InterPro" id="IPR004100">
    <property type="entry name" value="ATPase_F1/V1/A1_a/bsu_N"/>
</dbReference>
<dbReference type="InterPro" id="IPR036121">
    <property type="entry name" value="ATPase_F1/V1/A1_a/bsu_N_sf"/>
</dbReference>
<dbReference type="InterPro" id="IPR000194">
    <property type="entry name" value="ATPase_F1/V1/A1_a/bsu_nucl-bd"/>
</dbReference>
<dbReference type="InterPro" id="IPR027417">
    <property type="entry name" value="P-loop_NTPase"/>
</dbReference>
<dbReference type="NCBIfam" id="TIGR00962">
    <property type="entry name" value="atpA"/>
    <property type="match status" value="1"/>
</dbReference>
<dbReference type="NCBIfam" id="NF009884">
    <property type="entry name" value="PRK13343.1"/>
    <property type="match status" value="1"/>
</dbReference>
<dbReference type="PANTHER" id="PTHR48082">
    <property type="entry name" value="ATP SYNTHASE SUBUNIT ALPHA, MITOCHONDRIAL"/>
    <property type="match status" value="1"/>
</dbReference>
<dbReference type="PANTHER" id="PTHR48082:SF2">
    <property type="entry name" value="ATP SYNTHASE SUBUNIT ALPHA, MITOCHONDRIAL"/>
    <property type="match status" value="1"/>
</dbReference>
<dbReference type="Pfam" id="PF00006">
    <property type="entry name" value="ATP-synt_ab"/>
    <property type="match status" value="1"/>
</dbReference>
<dbReference type="Pfam" id="PF00306">
    <property type="entry name" value="ATP-synt_ab_C"/>
    <property type="match status" value="1"/>
</dbReference>
<dbReference type="Pfam" id="PF02874">
    <property type="entry name" value="ATP-synt_ab_N"/>
    <property type="match status" value="1"/>
</dbReference>
<dbReference type="PIRSF" id="PIRSF039088">
    <property type="entry name" value="F_ATPase_subunit_alpha"/>
    <property type="match status" value="1"/>
</dbReference>
<dbReference type="SUPFAM" id="SSF47917">
    <property type="entry name" value="C-terminal domain of alpha and beta subunits of F1 ATP synthase"/>
    <property type="match status" value="1"/>
</dbReference>
<dbReference type="SUPFAM" id="SSF50615">
    <property type="entry name" value="N-terminal domain of alpha and beta subunits of F1 ATP synthase"/>
    <property type="match status" value="1"/>
</dbReference>
<dbReference type="SUPFAM" id="SSF52540">
    <property type="entry name" value="P-loop containing nucleoside triphosphate hydrolases"/>
    <property type="match status" value="1"/>
</dbReference>
<dbReference type="PROSITE" id="PS00152">
    <property type="entry name" value="ATPASE_ALPHA_BETA"/>
    <property type="match status" value="1"/>
</dbReference>
<comment type="function">
    <text>Produces ATP from ADP in the presence of a proton gradient across the membrane. The alpha chain is a regulatory subunit.</text>
</comment>
<comment type="catalytic activity">
    <reaction evidence="1">
        <text>ATP + H2O + 4 H(+)(in) = ADP + phosphate + 5 H(+)(out)</text>
        <dbReference type="Rhea" id="RHEA:57720"/>
        <dbReference type="ChEBI" id="CHEBI:15377"/>
        <dbReference type="ChEBI" id="CHEBI:15378"/>
        <dbReference type="ChEBI" id="CHEBI:30616"/>
        <dbReference type="ChEBI" id="CHEBI:43474"/>
        <dbReference type="ChEBI" id="CHEBI:456216"/>
        <dbReference type="EC" id="7.1.2.2"/>
    </reaction>
</comment>
<comment type="subunit">
    <text evidence="1">F-type ATPases have 2 components, CF(1) - the catalytic core - and CF(0) - the membrane proton channel. CF(1) has five subunits: alpha(3), beta(3), gamma(1), delta(1), epsilon(1). CF(0) has four main subunits: a, b, b' and c.</text>
</comment>
<comment type="subcellular location">
    <subcellularLocation>
        <location evidence="1">Plastid</location>
        <location evidence="1">Chloroplast thylakoid membrane</location>
        <topology evidence="1">Peripheral membrane protein</topology>
    </subcellularLocation>
</comment>
<comment type="similarity">
    <text evidence="1">Belongs to the ATPase alpha/beta chains family.</text>
</comment>
<comment type="sequence caution" evidence="2">
    <conflict type="erroneous initiation">
        <sequence resource="EMBL-CDS" id="CAB88710"/>
    </conflict>
</comment>
<protein>
    <recommendedName>
        <fullName evidence="1">ATP synthase subunit alpha, chloroplastic</fullName>
        <ecNumber evidence="1">7.1.2.2</ecNumber>
    </recommendedName>
    <alternativeName>
        <fullName evidence="1">ATP synthase F1 sector subunit alpha</fullName>
    </alternativeName>
    <alternativeName>
        <fullName evidence="1">F-ATPase subunit alpha</fullName>
    </alternativeName>
</protein>
<name>ATPA_SPIOL</name>
<proteinExistence type="evidence at protein level"/>
<organism>
    <name type="scientific">Spinacia oleracea</name>
    <name type="common">Spinach</name>
    <dbReference type="NCBI Taxonomy" id="3562"/>
    <lineage>
        <taxon>Eukaryota</taxon>
        <taxon>Viridiplantae</taxon>
        <taxon>Streptophyta</taxon>
        <taxon>Embryophyta</taxon>
        <taxon>Tracheophyta</taxon>
        <taxon>Spermatophyta</taxon>
        <taxon>Magnoliopsida</taxon>
        <taxon>eudicotyledons</taxon>
        <taxon>Gunneridae</taxon>
        <taxon>Pentapetalae</taxon>
        <taxon>Caryophyllales</taxon>
        <taxon>Chenopodiaceae</taxon>
        <taxon>Chenopodioideae</taxon>
        <taxon>Anserineae</taxon>
        <taxon>Spinacia</taxon>
    </lineage>
</organism>
<evidence type="ECO:0000255" key="1">
    <source>
        <dbReference type="HAMAP-Rule" id="MF_01346"/>
    </source>
</evidence>
<evidence type="ECO:0000305" key="2"/>
<evidence type="ECO:0007829" key="3">
    <source>
        <dbReference type="PDB" id="1FX0"/>
    </source>
</evidence>
<evidence type="ECO:0007829" key="4">
    <source>
        <dbReference type="PDB" id="1KMH"/>
    </source>
</evidence>
<evidence type="ECO:0007829" key="5">
    <source>
        <dbReference type="PDB" id="6FKF"/>
    </source>
</evidence>
<keyword id="KW-0002">3D-structure</keyword>
<keyword id="KW-0066">ATP synthesis</keyword>
<keyword id="KW-0067">ATP-binding</keyword>
<keyword id="KW-0139">CF(1)</keyword>
<keyword id="KW-0150">Chloroplast</keyword>
<keyword id="KW-0903">Direct protein sequencing</keyword>
<keyword id="KW-0375">Hydrogen ion transport</keyword>
<keyword id="KW-0406">Ion transport</keyword>
<keyword id="KW-0472">Membrane</keyword>
<keyword id="KW-0547">Nucleotide-binding</keyword>
<keyword id="KW-0934">Plastid</keyword>
<keyword id="KW-1185">Reference proteome</keyword>
<keyword id="KW-0793">Thylakoid</keyword>
<keyword id="KW-1278">Translocase</keyword>
<keyword id="KW-0813">Transport</keyword>
<accession>P06450</accession>
<accession>Q9LD04</accession>
<gene>
    <name evidence="1" type="primary">atpA</name>
</gene>
<geneLocation type="chloroplast"/>
<reference key="1">
    <citation type="journal article" date="1987" name="J. Mol. Biol.">
        <title>A gene cluster in the spinach and pea chloroplast genomes encoding one CF1 and three CF0 subunits of the H+-ATP synthase complex and the ribosomal protein S2.</title>
        <authorList>
            <person name="Hudson G.S."/>
            <person name="Mason J.G."/>
            <person name="Holton T.A."/>
            <person name="Koller B."/>
            <person name="Cox G.B."/>
            <person name="Whitfeld P.R."/>
            <person name="Bottomley W."/>
        </authorList>
    </citation>
    <scope>NUCLEOTIDE SEQUENCE [GENOMIC DNA]</scope>
</reference>
<reference key="2">
    <citation type="journal article" date="2001" name="Plant Mol. Biol.">
        <title>The plastid chromosome of spinach (Spinacia oleracea): complete nucleotide sequence and gene organization.</title>
        <authorList>
            <person name="Schmitz-Linneweber C."/>
            <person name="Maier R.M."/>
            <person name="Alcaraz J.-P."/>
            <person name="Cottet A."/>
            <person name="Herrmann R.G."/>
            <person name="Mache R."/>
        </authorList>
    </citation>
    <scope>NUCLEOTIDE SEQUENCE [LARGE SCALE GENOMIC DNA]</scope>
    <source>
        <strain>cv. Geant d'hiver</strain>
        <strain>cv. Monatol</strain>
    </source>
</reference>
<reference key="3">
    <citation type="journal article" date="1986" name="Mol. Gen. Genet.">
        <title>Chloroplast ATP synthase of spinach contains nine nonidentical subunit species, six of which are encoded by plastid chromosomes in two operons in a phylogenetically conserved arrangement.</title>
        <authorList>
            <person name="Hennig J."/>
            <person name="Herrmann R.G."/>
        </authorList>
    </citation>
    <scope>NUCLEOTIDE SEQUENCE [GENOMIC DNA] OF 1-83</scope>
</reference>
<reference key="4">
    <citation type="journal article" date="1991" name="Eur. J. Biochem.">
        <title>Inactivation of chloroplast H(+)-ATPase by modification of Lys beta 359, Lys alpha 176 and Lys alpha 266.</title>
        <authorList>
            <person name="Horbach M."/>
            <person name="Meyer H.E."/>
            <person name="Bickel-Sandkoetter S."/>
        </authorList>
    </citation>
    <scope>PROTEIN SEQUENCE OF 158-177; 221-229 AND 252-261</scope>
    <scope>CHARACTERIZATION</scope>
</reference>
<reference key="5">
    <citation type="journal article" date="2001" name="J. Biol. Chem.">
        <title>The structure of the chloroplast F1-ATPase at 3.2 A resolution.</title>
        <authorList>
            <person name="Groth G."/>
            <person name="Pohl E."/>
        </authorList>
    </citation>
    <scope>X-RAY CRYSTALLOGRAPHY (3.4 ANGSTROMS) OF 25-501 IN COMPLEX WITH BETA CHAIN</scope>
</reference>
<feature type="chain" id="PRO_0000144392" description="ATP synthase subunit alpha, chloroplastic">
    <location>
        <begin position="1"/>
        <end position="507"/>
    </location>
</feature>
<feature type="binding site" evidence="1">
    <location>
        <begin position="170"/>
        <end position="177"/>
    </location>
    <ligand>
        <name>ATP</name>
        <dbReference type="ChEBI" id="CHEBI:30616"/>
    </ligand>
</feature>
<feature type="site" description="Required for activity" evidence="1">
    <location>
        <position position="363"/>
    </location>
</feature>
<feature type="helix" evidence="5">
    <location>
        <begin position="6"/>
        <end position="16"/>
    </location>
</feature>
<feature type="strand" evidence="5">
    <location>
        <begin position="27"/>
        <end position="36"/>
    </location>
</feature>
<feature type="strand" evidence="5">
    <location>
        <begin position="39"/>
        <end position="44"/>
    </location>
</feature>
<feature type="strand" evidence="5">
    <location>
        <begin position="53"/>
        <end position="56"/>
    </location>
</feature>
<feature type="strand" evidence="5">
    <location>
        <begin position="61"/>
        <end position="67"/>
    </location>
</feature>
<feature type="strand" evidence="5">
    <location>
        <begin position="72"/>
        <end position="78"/>
    </location>
</feature>
<feature type="helix" evidence="3">
    <location>
        <begin position="80"/>
        <end position="82"/>
    </location>
</feature>
<feature type="strand" evidence="5">
    <location>
        <begin position="88"/>
        <end position="91"/>
    </location>
</feature>
<feature type="strand" evidence="5">
    <location>
        <begin position="97"/>
        <end position="100"/>
    </location>
</feature>
<feature type="helix" evidence="5">
    <location>
        <begin position="102"/>
        <end position="104"/>
    </location>
</feature>
<feature type="strand" evidence="3">
    <location>
        <begin position="111"/>
        <end position="113"/>
    </location>
</feature>
<feature type="strand" evidence="5">
    <location>
        <begin position="117"/>
        <end position="119"/>
    </location>
</feature>
<feature type="strand" evidence="5">
    <location>
        <begin position="126"/>
        <end position="129"/>
    </location>
</feature>
<feature type="strand" evidence="3">
    <location>
        <begin position="137"/>
        <end position="140"/>
    </location>
</feature>
<feature type="helix" evidence="5">
    <location>
        <begin position="152"/>
        <end position="155"/>
    </location>
</feature>
<feature type="strand" evidence="5">
    <location>
        <begin position="165"/>
        <end position="171"/>
    </location>
</feature>
<feature type="helix" evidence="5">
    <location>
        <begin position="176"/>
        <end position="186"/>
    </location>
</feature>
<feature type="turn" evidence="3">
    <location>
        <begin position="189"/>
        <end position="191"/>
    </location>
</feature>
<feature type="strand" evidence="5">
    <location>
        <begin position="193"/>
        <end position="201"/>
    </location>
</feature>
<feature type="helix" evidence="5">
    <location>
        <begin position="203"/>
        <end position="215"/>
    </location>
</feature>
<feature type="helix" evidence="5">
    <location>
        <begin position="218"/>
        <end position="220"/>
    </location>
</feature>
<feature type="strand" evidence="5">
    <location>
        <begin position="221"/>
        <end position="228"/>
    </location>
</feature>
<feature type="strand" evidence="4">
    <location>
        <begin position="229"/>
        <end position="231"/>
    </location>
</feature>
<feature type="helix" evidence="5">
    <location>
        <begin position="233"/>
        <end position="237"/>
    </location>
</feature>
<feature type="helix" evidence="5">
    <location>
        <begin position="239"/>
        <end position="252"/>
    </location>
</feature>
<feature type="strand" evidence="5">
    <location>
        <begin position="256"/>
        <end position="262"/>
    </location>
</feature>
<feature type="helix" evidence="5">
    <location>
        <begin position="265"/>
        <end position="277"/>
    </location>
</feature>
<feature type="helix" evidence="5">
    <location>
        <begin position="284"/>
        <end position="286"/>
    </location>
</feature>
<feature type="helix" evidence="5">
    <location>
        <begin position="291"/>
        <end position="299"/>
    </location>
</feature>
<feature type="strand" evidence="4">
    <location>
        <begin position="303"/>
        <end position="305"/>
    </location>
</feature>
<feature type="turn" evidence="5">
    <location>
        <begin position="307"/>
        <end position="310"/>
    </location>
</feature>
<feature type="strand" evidence="5">
    <location>
        <begin position="313"/>
        <end position="321"/>
    </location>
</feature>
<feature type="helix" evidence="5">
    <location>
        <begin position="330"/>
        <end position="338"/>
    </location>
</feature>
<feature type="strand" evidence="5">
    <location>
        <begin position="339"/>
        <end position="345"/>
    </location>
</feature>
<feature type="helix" evidence="5">
    <location>
        <begin position="347"/>
        <end position="350"/>
    </location>
</feature>
<feature type="turn" evidence="5">
    <location>
        <begin position="351"/>
        <end position="353"/>
    </location>
</feature>
<feature type="turn" evidence="5">
    <location>
        <begin position="360"/>
        <end position="362"/>
    </location>
</feature>
<feature type="helix" evidence="5">
    <location>
        <begin position="368"/>
        <end position="370"/>
    </location>
</feature>
<feature type="helix" evidence="5">
    <location>
        <begin position="374"/>
        <end position="392"/>
    </location>
</feature>
<feature type="turn" evidence="3">
    <location>
        <begin position="394"/>
        <end position="396"/>
    </location>
</feature>
<feature type="helix" evidence="5">
    <location>
        <begin position="397"/>
        <end position="399"/>
    </location>
</feature>
<feature type="strand" evidence="5">
    <location>
        <begin position="400"/>
        <end position="403"/>
    </location>
</feature>
<feature type="helix" evidence="5">
    <location>
        <begin position="405"/>
        <end position="420"/>
    </location>
</feature>
<feature type="helix" evidence="5">
    <location>
        <begin position="431"/>
        <end position="442"/>
    </location>
</feature>
<feature type="turn" evidence="5">
    <location>
        <begin position="443"/>
        <end position="448"/>
    </location>
</feature>
<feature type="helix" evidence="5">
    <location>
        <begin position="451"/>
        <end position="467"/>
    </location>
</feature>
<feature type="helix" evidence="5">
    <location>
        <begin position="471"/>
        <end position="478"/>
    </location>
</feature>
<feature type="helix" evidence="5">
    <location>
        <begin position="484"/>
        <end position="503"/>
    </location>
</feature>